<gene>
    <name type="primary">fimA</name>
</gene>
<proteinExistence type="inferred from homology"/>
<sequence>MKSLQKGFTLIELMIVVAIIGILAAFAIPAYNDYIARTQVSEGVSLADGLKIRIADNLQDGKCTSEGDPASGEVGNTDMGKYALATIEGTPDANLAGLTPKDPNGCKVKIEYGKGTAGDNISPLIKGQMLVLNQLVNGSYDKDSSSTVKPKFLPKALKEATP</sequence>
<feature type="propeptide" id="PRO_0000024135" description="Leader sequence" evidence="4">
    <location>
        <begin position="1"/>
        <end position="7"/>
    </location>
</feature>
<feature type="chain" id="PRO_0000024136" description="Type IV major fimbrial protein FimA">
    <location>
        <begin position="8"/>
        <end position="162"/>
    </location>
</feature>
<feature type="transmembrane region" description="Helical" evidence="3">
    <location>
        <begin position="8"/>
        <end position="28"/>
    </location>
</feature>
<feature type="modified residue" description="N-methylphenylalanine" evidence="4">
    <location>
        <position position="8"/>
    </location>
</feature>
<feature type="disulfide bond" evidence="2">
    <location>
        <begin position="63"/>
        <end position="106"/>
    </location>
</feature>
<comment type="function">
    <text evidence="1">Major component of the type IV fimbriae that plays an essential role in twitching motility, natural transformation, and protease secretion.</text>
</comment>
<comment type="subunit">
    <text>The pili are polar flexible filaments of about 5.4 nanometers diameter and 2.5 micrometers average length; they consist of only a single polypeptide chain arranged in a helical configuration of five subunits per turn in the assembled pilus.</text>
</comment>
<comment type="subcellular location">
    <subcellularLocation>
        <location evidence="1">Fimbrium</location>
    </subcellularLocation>
    <subcellularLocation>
        <location evidence="3">Membrane</location>
        <topology evidence="3">Single-pass membrane protein</topology>
    </subcellularLocation>
</comment>
<comment type="similarity">
    <text evidence="5">Belongs to the N-Me-Phe pilin family.</text>
</comment>
<organism>
    <name type="scientific">Dichelobacter nodosus</name>
    <name type="common">Bacteroides nodosus</name>
    <dbReference type="NCBI Taxonomy" id="870"/>
    <lineage>
        <taxon>Bacteria</taxon>
        <taxon>Pseudomonadati</taxon>
        <taxon>Pseudomonadota</taxon>
        <taxon>Gammaproteobacteria</taxon>
        <taxon>Cardiobacteriales</taxon>
        <taxon>Cardiobacteriaceae</taxon>
        <taxon>Dichelobacter</taxon>
    </lineage>
</organism>
<name>FMAG_DICNO</name>
<keyword id="KW-1015">Disulfide bond</keyword>
<keyword id="KW-0281">Fimbrium</keyword>
<keyword id="KW-0472">Membrane</keyword>
<keyword id="KW-0488">Methylation</keyword>
<keyword id="KW-0812">Transmembrane</keyword>
<keyword id="KW-1133">Transmembrane helix</keyword>
<evidence type="ECO:0000250" key="1">
    <source>
        <dbReference type="UniProtKB" id="A5EWR9"/>
    </source>
</evidence>
<evidence type="ECO:0000250" key="2">
    <source>
        <dbReference type="UniProtKB" id="P02975"/>
    </source>
</evidence>
<evidence type="ECO:0000255" key="3"/>
<evidence type="ECO:0000255" key="4">
    <source>
        <dbReference type="PROSITE-ProRule" id="PRU01070"/>
    </source>
</evidence>
<evidence type="ECO:0000305" key="5"/>
<dbReference type="EMBL" id="Y00425">
    <property type="protein sequence ID" value="CAA68487.1"/>
    <property type="molecule type" value="Genomic_DNA"/>
</dbReference>
<dbReference type="EMBL" id="X52409">
    <property type="protein sequence ID" value="CAA36660.1"/>
    <property type="molecule type" value="Genomic_DNA"/>
</dbReference>
<dbReference type="PIR" id="A26857">
    <property type="entry name" value="A26857"/>
</dbReference>
<dbReference type="SMR" id="P11933"/>
<dbReference type="GO" id="GO:0016020">
    <property type="term" value="C:membrane"/>
    <property type="evidence" value="ECO:0007669"/>
    <property type="project" value="UniProtKB-SubCell"/>
</dbReference>
<dbReference type="GO" id="GO:0009289">
    <property type="term" value="C:pilus"/>
    <property type="evidence" value="ECO:0007669"/>
    <property type="project" value="UniProtKB-SubCell"/>
</dbReference>
<dbReference type="GO" id="GO:0015627">
    <property type="term" value="C:type II protein secretion system complex"/>
    <property type="evidence" value="ECO:0007669"/>
    <property type="project" value="InterPro"/>
</dbReference>
<dbReference type="GO" id="GO:0007155">
    <property type="term" value="P:cell adhesion"/>
    <property type="evidence" value="ECO:0007669"/>
    <property type="project" value="InterPro"/>
</dbReference>
<dbReference type="GO" id="GO:0015628">
    <property type="term" value="P:protein secretion by the type II secretion system"/>
    <property type="evidence" value="ECO:0007669"/>
    <property type="project" value="InterPro"/>
</dbReference>
<dbReference type="Gene3D" id="3.30.700.10">
    <property type="entry name" value="Glycoprotein, Type 4 Pilin"/>
    <property type="match status" value="1"/>
</dbReference>
<dbReference type="InterPro" id="IPR012902">
    <property type="entry name" value="N_methyl_site"/>
</dbReference>
<dbReference type="InterPro" id="IPR001082">
    <property type="entry name" value="Pilin"/>
</dbReference>
<dbReference type="InterPro" id="IPR045584">
    <property type="entry name" value="Pilin-like"/>
</dbReference>
<dbReference type="InterPro" id="IPR002416">
    <property type="entry name" value="T2SS_protein-GspH"/>
</dbReference>
<dbReference type="InterPro" id="IPR050470">
    <property type="entry name" value="T4P/T2SS_Core"/>
</dbReference>
<dbReference type="NCBIfam" id="TIGR02532">
    <property type="entry name" value="IV_pilin_GFxxxE"/>
    <property type="match status" value="1"/>
</dbReference>
<dbReference type="PANTHER" id="PTHR30093">
    <property type="entry name" value="GENERAL SECRETION PATHWAY PROTEIN G"/>
    <property type="match status" value="1"/>
</dbReference>
<dbReference type="PANTHER" id="PTHR30093:SF34">
    <property type="entry name" value="PREPILIN PEPTIDASE-DEPENDENT PROTEIN D"/>
    <property type="match status" value="1"/>
</dbReference>
<dbReference type="Pfam" id="PF07963">
    <property type="entry name" value="N_methyl"/>
    <property type="match status" value="1"/>
</dbReference>
<dbReference type="Pfam" id="PF00114">
    <property type="entry name" value="Pilin"/>
    <property type="match status" value="1"/>
</dbReference>
<dbReference type="PRINTS" id="PR00885">
    <property type="entry name" value="BCTERIALGSPH"/>
</dbReference>
<dbReference type="SUPFAM" id="SSF54523">
    <property type="entry name" value="Pili subunits"/>
    <property type="match status" value="1"/>
</dbReference>
<dbReference type="PROSITE" id="PS00409">
    <property type="entry name" value="PROKAR_NTER_METHYL"/>
    <property type="match status" value="1"/>
</dbReference>
<protein>
    <recommendedName>
        <fullName>Type IV major fimbrial protein FimA</fullName>
    </recommendedName>
    <alternativeName>
        <fullName>238 antigen</fullName>
    </alternativeName>
    <alternativeName>
        <fullName>Pilin</fullName>
    </alternativeName>
    <alternativeName>
        <fullName>Serogroup G1</fullName>
    </alternativeName>
</protein>
<accession>P11933</accession>
<reference key="1">
    <citation type="journal article" date="1987" name="Nucleic Acids Res.">
        <title>Nucleotide sequence of the pilin gene from Bacteroides nodosus strain 238 (serogroup G).</title>
        <authorList>
            <person name="Elleman T.C."/>
            <person name="von Ahlefeldt D.A."/>
        </authorList>
    </citation>
    <scope>NUCLEOTIDE SEQUENCE [GENOMIC DNA]</scope>
    <source>
        <strain>Serogroup G isolate 238</strain>
    </source>
</reference>
<reference key="2">
    <citation type="journal article" date="1991" name="Mol. Microbiol.">
        <title>Gene sequences and comparison of the fimbrial subunits representative of Bacteroides nodosus serotypes A to I: class I and class II strains.</title>
        <authorList>
            <person name="Mattick J.S."/>
            <person name="Anderson B.J."/>
            <person name="Cox P.T."/>
            <person name="Dalrymple B.P."/>
            <person name="Bills M.M."/>
            <person name="Hobbs M."/>
            <person name="Egerton J.R."/>
        </authorList>
    </citation>
    <scope>NUCLEOTIDE SEQUENCE [GENOMIC DNA]</scope>
    <source>
        <strain>Serogroup G1 isolate VCS1220</strain>
    </source>
</reference>